<accession>Q11205</accession>
<protein>
    <recommendedName>
        <fullName>CMP-N-acetylneuraminate-beta-galactosamide-alpha-2,3-sialyltransferase 2</fullName>
        <shortName>Alpha 2,3-ST 2</shortName>
        <shortName>Beta-galactoside alpha-2,3-sialyltransferase 2</shortName>
        <ecNumber evidence="5">2.4.3.4</ecNumber>
    </recommendedName>
    <alternativeName>
        <fullName>Gal-NAc6S</fullName>
    </alternativeName>
    <alternativeName>
        <fullName evidence="6">Gal-beta-1,3-GalNAc-alpha-2,3-sialyltransferase</fullName>
    </alternativeName>
    <alternativeName>
        <fullName>Monosialoganglioside sialyltransferase</fullName>
        <ecNumber evidence="8">2.4.3.2</ecNumber>
    </alternativeName>
    <alternativeName>
        <fullName>ST3Gal II</fullName>
        <shortName>ST3GalII</shortName>
    </alternativeName>
    <alternativeName>
        <fullName>ST3GalA.2</fullName>
    </alternativeName>
    <alternativeName>
        <fullName>Sialyltransferase 4B</fullName>
        <shortName>SIAT4-B</shortName>
    </alternativeName>
</protein>
<proteinExistence type="evidence at protein level"/>
<evidence type="ECO:0000250" key="1"/>
<evidence type="ECO:0000250" key="2">
    <source>
        <dbReference type="UniProtKB" id="Q11204"/>
    </source>
</evidence>
<evidence type="ECO:0000250" key="3">
    <source>
        <dbReference type="UniProtKB" id="Q16842"/>
    </source>
</evidence>
<evidence type="ECO:0000255" key="4"/>
<evidence type="ECO:0000269" key="5">
    <source>
    </source>
</evidence>
<evidence type="ECO:0000303" key="6">
    <source>
    </source>
</evidence>
<evidence type="ECO:0000305" key="7"/>
<evidence type="ECO:0000305" key="8">
    <source>
    </source>
</evidence>
<sequence length="350" mass="40166">MKCSLRVWFLSMAFLLVFIMSLLFTYSHHSMATLPYLDSGTLGGTHRVKLVPGYTGQQRLVKEGLSGKSCTCSRCMGDAGTSEWFDSHFDSNISPVWTRDNMNLTPDVQRWWMMLQPQFKSHNTNEVLEKLFQIVPGENPYRFRDPQQCRRCAVVGNSGNLRGSGYGQEVDSHNFIMRMNQAPTVGFEKDVGSRTTHHFMYPESAKNLPANVSFVLVPFKALDLMWIASALSTGQIRFTYAPVKSFLRVDKEKVQIYNPAFFKYIHDRWTEHHGRYPSTGMLVLFFALHVCDEVNVYGFGADSRGNWHHYWENNRYAGEFRKTGVHDADFEAHIIDILAKASKIEVYRGN</sequence>
<gene>
    <name type="primary">St3gal2</name>
    <name type="synonym">Siat4b</name>
    <name type="synonym">Siat5</name>
</gene>
<organism>
    <name type="scientific">Rattus norvegicus</name>
    <name type="common">Rat</name>
    <dbReference type="NCBI Taxonomy" id="10116"/>
    <lineage>
        <taxon>Eukaryota</taxon>
        <taxon>Metazoa</taxon>
        <taxon>Chordata</taxon>
        <taxon>Craniata</taxon>
        <taxon>Vertebrata</taxon>
        <taxon>Euteleostomi</taxon>
        <taxon>Mammalia</taxon>
        <taxon>Eutheria</taxon>
        <taxon>Euarchontoglires</taxon>
        <taxon>Glires</taxon>
        <taxon>Rodentia</taxon>
        <taxon>Myomorpha</taxon>
        <taxon>Muroidea</taxon>
        <taxon>Muridae</taxon>
        <taxon>Murinae</taxon>
        <taxon>Rattus</taxon>
    </lineage>
</organism>
<dbReference type="EC" id="2.4.3.4" evidence="5"/>
<dbReference type="EC" id="2.4.3.2" evidence="8"/>
<dbReference type="EMBL" id="X76988">
    <property type="protein sequence ID" value="CAA54293.1"/>
    <property type="molecule type" value="mRNA"/>
</dbReference>
<dbReference type="PIR" id="B54420">
    <property type="entry name" value="B54420"/>
</dbReference>
<dbReference type="RefSeq" id="NP_113883.2">
    <property type="nucleotide sequence ID" value="NM_031695.2"/>
</dbReference>
<dbReference type="SMR" id="Q11205"/>
<dbReference type="FunCoup" id="Q11205">
    <property type="interactions" value="346"/>
</dbReference>
<dbReference type="STRING" id="10116.ENSRNOP00000024248"/>
<dbReference type="BindingDB" id="Q11205"/>
<dbReference type="ChEMBL" id="CHEMBL3638362"/>
<dbReference type="SwissLipids" id="SLP:000001414"/>
<dbReference type="CAZy" id="GT29">
    <property type="family name" value="Glycosyltransferase Family 29"/>
</dbReference>
<dbReference type="GlyCosmos" id="Q11205">
    <property type="glycosylation" value="1 site, No reported glycans"/>
</dbReference>
<dbReference type="GlyGen" id="Q11205">
    <property type="glycosylation" value="1 site"/>
</dbReference>
<dbReference type="PhosphoSitePlus" id="Q11205"/>
<dbReference type="PaxDb" id="10116-ENSRNOP00000024248"/>
<dbReference type="GeneID" id="64442"/>
<dbReference type="KEGG" id="rno:64442"/>
<dbReference type="UCSC" id="RGD:68413">
    <property type="organism name" value="rat"/>
</dbReference>
<dbReference type="AGR" id="RGD:68413"/>
<dbReference type="CTD" id="6483"/>
<dbReference type="RGD" id="68413">
    <property type="gene designation" value="St3gal2"/>
</dbReference>
<dbReference type="eggNOG" id="KOG2692">
    <property type="taxonomic scope" value="Eukaryota"/>
</dbReference>
<dbReference type="InParanoid" id="Q11205"/>
<dbReference type="OrthoDB" id="10264956at2759"/>
<dbReference type="PhylomeDB" id="Q11205"/>
<dbReference type="BRENDA" id="2.4.99.4">
    <property type="organism ID" value="5301"/>
</dbReference>
<dbReference type="Reactome" id="R-RNO-2022854">
    <property type="pathway name" value="Keratan sulfate biosynthesis"/>
</dbReference>
<dbReference type="Reactome" id="R-RNO-4085001">
    <property type="pathway name" value="Sialic acid metabolism"/>
</dbReference>
<dbReference type="Reactome" id="R-RNO-977068">
    <property type="pathway name" value="Termination of O-glycan biosynthesis"/>
</dbReference>
<dbReference type="Reactome" id="R-RNO-9840309">
    <property type="pathway name" value="Glycosphingolipid biosynthesis"/>
</dbReference>
<dbReference type="UniPathway" id="UPA00378"/>
<dbReference type="PRO" id="PR:Q11205"/>
<dbReference type="Proteomes" id="UP000002494">
    <property type="component" value="Unplaced"/>
</dbReference>
<dbReference type="GO" id="GO:0005576">
    <property type="term" value="C:extracellular region"/>
    <property type="evidence" value="ECO:0007669"/>
    <property type="project" value="UniProtKB-SubCell"/>
</dbReference>
<dbReference type="GO" id="GO:0032580">
    <property type="term" value="C:Golgi cisterna membrane"/>
    <property type="evidence" value="ECO:0007669"/>
    <property type="project" value="UniProtKB-SubCell"/>
</dbReference>
<dbReference type="GO" id="GO:0000139">
    <property type="term" value="C:Golgi membrane"/>
    <property type="evidence" value="ECO:0000250"/>
    <property type="project" value="UniProtKB"/>
</dbReference>
<dbReference type="GO" id="GO:0016020">
    <property type="term" value="C:membrane"/>
    <property type="evidence" value="ECO:0000318"/>
    <property type="project" value="GO_Central"/>
</dbReference>
<dbReference type="GO" id="GO:0047288">
    <property type="term" value="F:beta-D-galactosyl-(1-&gt;3)-N-acetyl-beta-D-galactosaminide alpha-2,3- sialyltransferase"/>
    <property type="evidence" value="ECO:0000266"/>
    <property type="project" value="RGD"/>
</dbReference>
<dbReference type="GO" id="GO:0003836">
    <property type="term" value="F:beta-galactoside (CMP) alpha-2,3-sialyltransferase activity"/>
    <property type="evidence" value="ECO:0000314"/>
    <property type="project" value="UniProtKB"/>
</dbReference>
<dbReference type="GO" id="GO:0042803">
    <property type="term" value="F:protein homodimerization activity"/>
    <property type="evidence" value="ECO:0000250"/>
    <property type="project" value="UniProtKB"/>
</dbReference>
<dbReference type="GO" id="GO:0008373">
    <property type="term" value="F:sialyltransferase activity"/>
    <property type="evidence" value="ECO:0000314"/>
    <property type="project" value="RGD"/>
</dbReference>
<dbReference type="GO" id="GO:0010706">
    <property type="term" value="P:ganglioside biosynthetic process via lactosylceramide"/>
    <property type="evidence" value="ECO:0000314"/>
    <property type="project" value="UniProtKB"/>
</dbReference>
<dbReference type="GO" id="GO:0010707">
    <property type="term" value="P:globoside biosynthetic process via lactosylceramide"/>
    <property type="evidence" value="ECO:0000250"/>
    <property type="project" value="UniProtKB"/>
</dbReference>
<dbReference type="GO" id="GO:0009247">
    <property type="term" value="P:glycolipid biosynthetic process"/>
    <property type="evidence" value="ECO:0000266"/>
    <property type="project" value="RGD"/>
</dbReference>
<dbReference type="GO" id="GO:0009101">
    <property type="term" value="P:glycoprotein biosynthetic process"/>
    <property type="evidence" value="ECO:0000266"/>
    <property type="project" value="RGD"/>
</dbReference>
<dbReference type="GO" id="GO:0030259">
    <property type="term" value="P:lipid glycosylation"/>
    <property type="evidence" value="ECO:0000266"/>
    <property type="project" value="RGD"/>
</dbReference>
<dbReference type="GO" id="GO:0009312">
    <property type="term" value="P:oligosaccharide biosynthetic process"/>
    <property type="evidence" value="ECO:0000266"/>
    <property type="project" value="RGD"/>
</dbReference>
<dbReference type="GO" id="GO:0006486">
    <property type="term" value="P:protein glycosylation"/>
    <property type="evidence" value="ECO:0000266"/>
    <property type="project" value="RGD"/>
</dbReference>
<dbReference type="GO" id="GO:0097503">
    <property type="term" value="P:sialylation"/>
    <property type="evidence" value="ECO:0000266"/>
    <property type="project" value="RGD"/>
</dbReference>
<dbReference type="CDD" id="cd23979">
    <property type="entry name" value="GT29_ST3GAL2"/>
    <property type="match status" value="1"/>
</dbReference>
<dbReference type="FunFam" id="3.90.1480.20:FF:000002">
    <property type="entry name" value="CMP-N-acetylneuraminate-beta-galactosamide- alpha-2,3-sialyltransferase 2"/>
    <property type="match status" value="1"/>
</dbReference>
<dbReference type="Gene3D" id="3.90.1480.20">
    <property type="entry name" value="Glycosyl transferase family 29"/>
    <property type="match status" value="1"/>
</dbReference>
<dbReference type="InterPro" id="IPR051757">
    <property type="entry name" value="Beta-gal_alpha2-3_sialyltrans"/>
</dbReference>
<dbReference type="InterPro" id="IPR001675">
    <property type="entry name" value="Glyco_trans_29"/>
</dbReference>
<dbReference type="InterPro" id="IPR038578">
    <property type="entry name" value="GT29-like_sf"/>
</dbReference>
<dbReference type="InterPro" id="IPR012163">
    <property type="entry name" value="Sialyl_trans"/>
</dbReference>
<dbReference type="PANTHER" id="PTHR46032">
    <property type="entry name" value="ALPHA-2,3-SIALYLTRANSFERASE ST3GAL I ISOFORM X1"/>
    <property type="match status" value="1"/>
</dbReference>
<dbReference type="PANTHER" id="PTHR46032:SF4">
    <property type="entry name" value="CMP-N-ACETYLNEURAMINATE-BETA-GALACTOSAMIDE-ALPHA-2,3-SIALYLTRANSFERASE 2"/>
    <property type="match status" value="1"/>
</dbReference>
<dbReference type="Pfam" id="PF00777">
    <property type="entry name" value="Glyco_transf_29"/>
    <property type="match status" value="1"/>
</dbReference>
<dbReference type="PIRSF" id="PIRSF005557">
    <property type="entry name" value="Sialyl_trans"/>
    <property type="match status" value="1"/>
</dbReference>
<feature type="chain" id="PRO_0000149261" description="CMP-N-acetylneuraminate-beta-galactosamide-alpha-2,3-sialyltransferase 2">
    <location>
        <begin position="1"/>
        <end position="350"/>
    </location>
</feature>
<feature type="topological domain" description="Cytoplasmic" evidence="4">
    <location>
        <begin position="1"/>
        <end position="6"/>
    </location>
</feature>
<feature type="transmembrane region" description="Helical; Signal-anchor for type II membrane protein" evidence="4">
    <location>
        <begin position="7"/>
        <end position="27"/>
    </location>
</feature>
<feature type="topological domain" description="Lumenal" evidence="4">
    <location>
        <begin position="28"/>
        <end position="350"/>
    </location>
</feature>
<feature type="binding site" evidence="1">
    <location>
        <position position="116"/>
    </location>
    <ligand>
        <name>substrate</name>
    </ligand>
</feature>
<feature type="binding site" evidence="1">
    <location>
        <position position="157"/>
    </location>
    <ligand>
        <name>substrate</name>
    </ligand>
</feature>
<feature type="binding site" evidence="1">
    <location>
        <position position="180"/>
    </location>
    <ligand>
        <name>substrate</name>
    </ligand>
</feature>
<feature type="binding site" evidence="1">
    <location>
        <position position="240"/>
    </location>
    <ligand>
        <name>substrate</name>
    </ligand>
</feature>
<feature type="binding site" evidence="1">
    <location>
        <position position="276"/>
    </location>
    <ligand>
        <name>substrate</name>
    </ligand>
</feature>
<feature type="binding site" evidence="1">
    <location>
        <position position="280"/>
    </location>
    <ligand>
        <name>substrate</name>
    </ligand>
</feature>
<feature type="binding site" evidence="1">
    <location>
        <position position="300"/>
    </location>
    <ligand>
        <name>substrate</name>
    </ligand>
</feature>
<feature type="binding site" evidence="1">
    <location>
        <position position="309"/>
    </location>
    <ligand>
        <name>substrate</name>
    </ligand>
</feature>
<feature type="binding site" evidence="1">
    <location>
        <position position="326"/>
    </location>
    <ligand>
        <name>substrate</name>
    </ligand>
</feature>
<feature type="glycosylation site" description="N-linked (GlcNAc...) asparagine" evidence="4">
    <location>
        <position position="211"/>
    </location>
</feature>
<feature type="disulfide bond" evidence="1">
    <location>
        <begin position="70"/>
        <end position="75"/>
    </location>
</feature>
<feature type="disulfide bond" evidence="1">
    <location>
        <begin position="72"/>
        <end position="149"/>
    </location>
</feature>
<feature type="disulfide bond" evidence="1">
    <location>
        <begin position="152"/>
        <end position="291"/>
    </location>
</feature>
<name>SIA4B_RAT</name>
<keyword id="KW-1015">Disulfide bond</keyword>
<keyword id="KW-0325">Glycoprotein</keyword>
<keyword id="KW-0328">Glycosyltransferase</keyword>
<keyword id="KW-0333">Golgi apparatus</keyword>
<keyword id="KW-0443">Lipid metabolism</keyword>
<keyword id="KW-0472">Membrane</keyword>
<keyword id="KW-1185">Reference proteome</keyword>
<keyword id="KW-0964">Secreted</keyword>
<keyword id="KW-0735">Signal-anchor</keyword>
<keyword id="KW-0808">Transferase</keyword>
<keyword id="KW-0812">Transmembrane</keyword>
<keyword id="KW-1133">Transmembrane helix</keyword>
<comment type="function">
    <text evidence="2 3 5">A beta-galactoside alpha2-3 sialyltransferase primarily involved in terminal sialylation of ganglio and globo series glycolipids (PubMed:8144500). Catalyzes the transfer of sialic acid (N-acetyl-neuraminic acid; Neu5Ac) from the nucleotide sugar donor CMP-Neu5Ac onto acceptor Galbeta-(1-&gt;3)-GalNAc-terminated glycoconjugates through an alpha2-3 linkage. Sialylates GM1/GM1a, GA1/asialo-GM1 gangliosides to form GD1a and GM1b, respectively (PubMed:8144500). Together with ST3GAL3, primarily responsible for biosynthesis of brain gangliosides that function as ligand for myelin-associated glycoprotein MAG on axons, regulating MAG expression and axonal myelin stability and regeneration (By similarity). Responsible for the sialylation of the pluripotent stem cell- and cancer stem cell-associated antigen SSEA3, forming SSEA4 (By similarity). Sialylates with low efficiency asialofetuin, presumably onto O-glycosidically linked Galbeta-(1-&gt;3)-GalNAc-O-Ser (PubMed:8144500).</text>
</comment>
<comment type="catalytic activity">
    <reaction evidence="5">
        <text>a beta-D-galactosyl-(1-&gt;3)-N-acetyl-alpha-D-galactosaminyl derivative + CMP-N-acetyl-beta-neuraminate = an N-acetyl-alpha-neuraminyl-(2-&gt;3)-beta-D-galactosyl-(1-&gt;3)-N-acetyl-alpha-D-galactosaminyl derivative + CMP + H(+)</text>
        <dbReference type="Rhea" id="RHEA:21616"/>
        <dbReference type="ChEBI" id="CHEBI:15378"/>
        <dbReference type="ChEBI" id="CHEBI:57812"/>
        <dbReference type="ChEBI" id="CHEBI:60377"/>
        <dbReference type="ChEBI" id="CHEBI:133470"/>
        <dbReference type="ChEBI" id="CHEBI:139596"/>
        <dbReference type="EC" id="2.4.3.4"/>
    </reaction>
    <physiologicalReaction direction="left-to-right" evidence="8">
        <dbReference type="Rhea" id="RHEA:21617"/>
    </physiologicalReaction>
</comment>
<comment type="catalytic activity">
    <reaction evidence="8">
        <text>a ganglioside GM1 (d18:1(4E)) + CMP-N-acetyl-beta-neuraminate = a ganglioside GD1a (d18:1(4E)) + CMP + H(+)</text>
        <dbReference type="Rhea" id="RHEA:18021"/>
        <dbReference type="ChEBI" id="CHEBI:15378"/>
        <dbReference type="ChEBI" id="CHEBI:57812"/>
        <dbReference type="ChEBI" id="CHEBI:60377"/>
        <dbReference type="ChEBI" id="CHEBI:77709"/>
        <dbReference type="ChEBI" id="CHEBI:78445"/>
        <dbReference type="EC" id="2.4.3.2"/>
    </reaction>
    <physiologicalReaction direction="left-to-right" evidence="8">
        <dbReference type="Rhea" id="RHEA:18022"/>
    </physiologicalReaction>
</comment>
<comment type="catalytic activity">
    <reaction evidence="5">
        <text>ganglioside GM1 (d18:1(4E)/18:0) + CMP-N-acetyl-beta-neuraminate = ganglioside GD1a (18:1(4E)/18:0) + CMP + H(+)</text>
        <dbReference type="Rhea" id="RHEA:48248"/>
        <dbReference type="ChEBI" id="CHEBI:15378"/>
        <dbReference type="ChEBI" id="CHEBI:57812"/>
        <dbReference type="ChEBI" id="CHEBI:60377"/>
        <dbReference type="ChEBI" id="CHEBI:73110"/>
        <dbReference type="ChEBI" id="CHEBI:90153"/>
    </reaction>
    <physiologicalReaction direction="left-to-right" evidence="8">
        <dbReference type="Rhea" id="RHEA:48249"/>
    </physiologicalReaction>
</comment>
<comment type="catalytic activity">
    <reaction evidence="5">
        <text>a ganglioside GA1 + CMP-N-acetyl-beta-neuraminate = a ganglioside GM1b + CMP + H(+)</text>
        <dbReference type="Rhea" id="RHEA:48244"/>
        <dbReference type="ChEBI" id="CHEBI:15378"/>
        <dbReference type="ChEBI" id="CHEBI:57812"/>
        <dbReference type="ChEBI" id="CHEBI:60377"/>
        <dbReference type="ChEBI" id="CHEBI:88069"/>
        <dbReference type="ChEBI" id="CHEBI:90151"/>
    </reaction>
    <physiologicalReaction direction="left-to-right" evidence="8">
        <dbReference type="Rhea" id="RHEA:48245"/>
    </physiologicalReaction>
</comment>
<comment type="catalytic activity">
    <reaction evidence="8">
        <text>a ganglioside GA1 (d18:1(4E)) + CMP-N-acetyl-beta-neuraminate = a ganglioside GM1b (d18:1(4E)) + CMP + H(+)</text>
        <dbReference type="Rhea" id="RHEA:47560"/>
        <dbReference type="ChEBI" id="CHEBI:15378"/>
        <dbReference type="ChEBI" id="CHEBI:27938"/>
        <dbReference type="ChEBI" id="CHEBI:57812"/>
        <dbReference type="ChEBI" id="CHEBI:60377"/>
        <dbReference type="ChEBI" id="CHEBI:78568"/>
    </reaction>
    <physiologicalReaction direction="left-to-right" evidence="8">
        <dbReference type="Rhea" id="RHEA:47561"/>
    </physiologicalReaction>
</comment>
<comment type="catalytic activity">
    <reaction evidence="3">
        <text>a globoside GalGb4Cer + CMP-N-acetyl-beta-neuraminate = a globoside MSGG + CMP + H(+)</text>
        <dbReference type="Rhea" id="RHEA:65372"/>
        <dbReference type="ChEBI" id="CHEBI:15378"/>
        <dbReference type="ChEBI" id="CHEBI:57812"/>
        <dbReference type="ChEBI" id="CHEBI:60377"/>
        <dbReference type="ChEBI" id="CHEBI:140623"/>
        <dbReference type="ChEBI" id="CHEBI:140691"/>
    </reaction>
    <physiologicalReaction direction="left-to-right" evidence="3">
        <dbReference type="Rhea" id="RHEA:65373"/>
    </physiologicalReaction>
</comment>
<comment type="pathway">
    <text evidence="8">Protein modification; protein glycosylation.</text>
</comment>
<comment type="pathway">
    <text evidence="8">Glycolipid biosynthesis.</text>
</comment>
<comment type="subunit">
    <text evidence="3">Homodimer; disulfide-linked. Homodimer formation occurs in the endoplasmic reticulum.</text>
</comment>
<comment type="subcellular location">
    <subcellularLocation>
        <location evidence="3">Golgi apparatus</location>
        <location evidence="3">Golgi stack membrane</location>
        <topology>Single-pass type II membrane protein</topology>
    </subcellularLocation>
    <subcellularLocation>
        <location>Secreted</location>
    </subcellularLocation>
    <text evidence="3">Membrane-bound form distributed along the Golgi cisternae, mainly in proximal compartments (By similarity). Secreted into the body fluid.</text>
</comment>
<comment type="PTM">
    <text>The soluble form derives from the membrane form by proteolytic processing.</text>
</comment>
<comment type="PTM">
    <text evidence="3">N-glycosylated; necessary for proper exit from endoplasmic reticulum and trafficking to the Golgi apparatus.</text>
</comment>
<comment type="similarity">
    <text evidence="7">Belongs to the glycosyltransferase 29 family.</text>
</comment>
<reference key="1">
    <citation type="journal article" date="1994" name="J. Biol. Chem.">
        <title>Cloning and expression of cDNA for a new type of Gal beta 1,3GalNAc alpha 2,3-sialyltransferase.</title>
        <authorList>
            <person name="Lee Y.-C."/>
            <person name="Kojima N."/>
            <person name="Wada E."/>
            <person name="Kurosawa N."/>
            <person name="Nakaoka T."/>
            <person name="Hamamoto T."/>
            <person name="Tsuji S."/>
        </authorList>
    </citation>
    <scope>NUCLEOTIDE SEQUENCE [MRNA]</scope>
    <scope>FUNCTION</scope>
    <scope>CATALYTIC ACTIVITY</scope>
    <scope>PATHWAY</scope>
    <source>
        <tissue>Brain</tissue>
    </source>
</reference>